<sequence length="71" mass="8496">MPVIKLRENEPFDVALRRFKRSCEKAGILAETRKREFFEKPTTVRKRAKAAAVKRHLKKLSRENARRVRLY</sequence>
<proteinExistence type="inferred from homology"/>
<protein>
    <recommendedName>
        <fullName evidence="1">Small ribosomal subunit protein bS21</fullName>
    </recommendedName>
    <alternativeName>
        <fullName evidence="2">30S ribosomal protein S21</fullName>
    </alternativeName>
</protein>
<dbReference type="EMBL" id="CP000510">
    <property type="protein sequence ID" value="ABM02179.1"/>
    <property type="molecule type" value="Genomic_DNA"/>
</dbReference>
<dbReference type="RefSeq" id="WP_011768738.1">
    <property type="nucleotide sequence ID" value="NC_008709.1"/>
</dbReference>
<dbReference type="SMR" id="A1SRR4"/>
<dbReference type="STRING" id="357804.Ping_0313"/>
<dbReference type="KEGG" id="pin:Ping_0313"/>
<dbReference type="eggNOG" id="COG0828">
    <property type="taxonomic scope" value="Bacteria"/>
</dbReference>
<dbReference type="HOGENOM" id="CLU_159258_1_0_6"/>
<dbReference type="OrthoDB" id="9799244at2"/>
<dbReference type="Proteomes" id="UP000000639">
    <property type="component" value="Chromosome"/>
</dbReference>
<dbReference type="GO" id="GO:1990904">
    <property type="term" value="C:ribonucleoprotein complex"/>
    <property type="evidence" value="ECO:0007669"/>
    <property type="project" value="UniProtKB-KW"/>
</dbReference>
<dbReference type="GO" id="GO:0005840">
    <property type="term" value="C:ribosome"/>
    <property type="evidence" value="ECO:0007669"/>
    <property type="project" value="UniProtKB-KW"/>
</dbReference>
<dbReference type="GO" id="GO:0003735">
    <property type="term" value="F:structural constituent of ribosome"/>
    <property type="evidence" value="ECO:0007669"/>
    <property type="project" value="InterPro"/>
</dbReference>
<dbReference type="GO" id="GO:0006412">
    <property type="term" value="P:translation"/>
    <property type="evidence" value="ECO:0007669"/>
    <property type="project" value="UniProtKB-UniRule"/>
</dbReference>
<dbReference type="Gene3D" id="1.20.5.1150">
    <property type="entry name" value="Ribosomal protein S8"/>
    <property type="match status" value="1"/>
</dbReference>
<dbReference type="HAMAP" id="MF_00358">
    <property type="entry name" value="Ribosomal_bS21"/>
    <property type="match status" value="1"/>
</dbReference>
<dbReference type="InterPro" id="IPR001911">
    <property type="entry name" value="Ribosomal_bS21"/>
</dbReference>
<dbReference type="InterPro" id="IPR018278">
    <property type="entry name" value="Ribosomal_bS21_CS"/>
</dbReference>
<dbReference type="InterPro" id="IPR038380">
    <property type="entry name" value="Ribosomal_bS21_sf"/>
</dbReference>
<dbReference type="NCBIfam" id="TIGR00030">
    <property type="entry name" value="S21p"/>
    <property type="match status" value="1"/>
</dbReference>
<dbReference type="PANTHER" id="PTHR21109">
    <property type="entry name" value="MITOCHONDRIAL 28S RIBOSOMAL PROTEIN S21"/>
    <property type="match status" value="1"/>
</dbReference>
<dbReference type="PANTHER" id="PTHR21109:SF22">
    <property type="entry name" value="SMALL RIBOSOMAL SUBUNIT PROTEIN BS21"/>
    <property type="match status" value="1"/>
</dbReference>
<dbReference type="Pfam" id="PF01165">
    <property type="entry name" value="Ribosomal_S21"/>
    <property type="match status" value="1"/>
</dbReference>
<dbReference type="PRINTS" id="PR00976">
    <property type="entry name" value="RIBOSOMALS21"/>
</dbReference>
<dbReference type="PROSITE" id="PS01181">
    <property type="entry name" value="RIBOSOMAL_S21"/>
    <property type="match status" value="1"/>
</dbReference>
<name>RS21_PSYIN</name>
<evidence type="ECO:0000255" key="1">
    <source>
        <dbReference type="HAMAP-Rule" id="MF_00358"/>
    </source>
</evidence>
<evidence type="ECO:0000305" key="2"/>
<accession>A1SRR4</accession>
<gene>
    <name evidence="1" type="primary">rpsU</name>
    <name type="ordered locus">Ping_0313</name>
</gene>
<keyword id="KW-1185">Reference proteome</keyword>
<keyword id="KW-0687">Ribonucleoprotein</keyword>
<keyword id="KW-0689">Ribosomal protein</keyword>
<comment type="similarity">
    <text evidence="1">Belongs to the bacterial ribosomal protein bS21 family.</text>
</comment>
<feature type="chain" id="PRO_1000005160" description="Small ribosomal subunit protein bS21">
    <location>
        <begin position="1"/>
        <end position="71"/>
    </location>
</feature>
<reference key="1">
    <citation type="journal article" date="2008" name="BMC Genomics">
        <title>Genomics of an extreme psychrophile, Psychromonas ingrahamii.</title>
        <authorList>
            <person name="Riley M."/>
            <person name="Staley J.T."/>
            <person name="Danchin A."/>
            <person name="Wang T.Z."/>
            <person name="Brettin T.S."/>
            <person name="Hauser L.J."/>
            <person name="Land M.L."/>
            <person name="Thompson L.S."/>
        </authorList>
    </citation>
    <scope>NUCLEOTIDE SEQUENCE [LARGE SCALE GENOMIC DNA]</scope>
    <source>
        <strain>DSM 17664 / CCUG 51855 / 37</strain>
    </source>
</reference>
<organism>
    <name type="scientific">Psychromonas ingrahamii (strain DSM 17664 / CCUG 51855 / 37)</name>
    <dbReference type="NCBI Taxonomy" id="357804"/>
    <lineage>
        <taxon>Bacteria</taxon>
        <taxon>Pseudomonadati</taxon>
        <taxon>Pseudomonadota</taxon>
        <taxon>Gammaproteobacteria</taxon>
        <taxon>Alteromonadales</taxon>
        <taxon>Psychromonadaceae</taxon>
        <taxon>Psychromonas</taxon>
    </lineage>
</organism>